<accession>P53091</accession>
<accession>D6VTV3</accession>
<accession>Q870M9</accession>
<name>MCM6_YEAST</name>
<proteinExistence type="evidence at protein level"/>
<comment type="function">
    <text evidence="5 6">Acts as a component of the MCM2-7 complex (MCM complex) which is the putative replicative helicase essential for 'once per cell cycle' DNA replication initiation and elongation in eukaryotic cells. The active ATPase sites in the MCM2-7 ring are formed through the interaction surfaces of two neighboring subunits such that a critical structure of a conserved arginine finger motif is provided in trans relative to the ATP-binding site of the Walker A box of the adjacent subunit. The six ATPase active sites, however, are likely to contribute differentially to the complex helicase activity. Once loaded onto DNA, double hexamers can slide on dsDNA in the absence of ATPase activity. Required for the entry in S phase and for cell division.</text>
</comment>
<comment type="catalytic activity">
    <reaction>
        <text>ATP + H2O = ADP + phosphate + H(+)</text>
        <dbReference type="Rhea" id="RHEA:13065"/>
        <dbReference type="ChEBI" id="CHEBI:15377"/>
        <dbReference type="ChEBI" id="CHEBI:15378"/>
        <dbReference type="ChEBI" id="CHEBI:30616"/>
        <dbReference type="ChEBI" id="CHEBI:43474"/>
        <dbReference type="ChEBI" id="CHEBI:456216"/>
        <dbReference type="EC" id="3.6.4.12"/>
    </reaction>
</comment>
<comment type="subunit">
    <text evidence="5 6 7">Component of the MCM2-7 complex. The complex forms a toroidal hexameric ring with the proposed subunit order MCM2-MCM6-MCM4-MCM7-MCM3-MCM5; loaded onto DNA, forms a head-head double hexamer. Interacts with MCM10.</text>
</comment>
<comment type="interaction">
    <interactant intactId="EBI-10556">
        <id>P53091</id>
    </interactant>
    <interactant intactId="EBI-5965">
        <id>P32354</id>
        <label>MCM10</label>
    </interactant>
    <organismsDiffer>false</organismsDiffer>
    <experiments>6</experiments>
</comment>
<comment type="interaction">
    <interactant intactId="EBI-10556">
        <id>P53091</id>
    </interactant>
    <interactant intactId="EBI-4326">
        <id>P30665</id>
        <label>MCM4</label>
    </interactant>
    <organismsDiffer>false</organismsDiffer>
    <experiments>8</experiments>
</comment>
<comment type="interaction">
    <interactant intactId="EBI-10556">
        <id>P53091</id>
    </interactant>
    <interactant intactId="EBI-17490">
        <id>Q12306</id>
        <label>SMT3</label>
    </interactant>
    <organismsDiffer>false</organismsDiffer>
    <experiments>2</experiments>
</comment>
<comment type="interaction">
    <interactant intactId="EBI-10556">
        <id>P53091</id>
    </interactant>
    <interactant intactId="EBI-25503">
        <id>P47112</id>
        <label>TAH11</label>
    </interactant>
    <organismsDiffer>false</organismsDiffer>
    <experiments>4</experiments>
</comment>
<comment type="subcellular location">
    <subcellularLocation>
        <location evidence="8">Nucleus</location>
    </subcellularLocation>
</comment>
<comment type="miscellaneous">
    <text evidence="3">Present with 13400 molecules/cell in log phase SD medium.</text>
</comment>
<comment type="miscellaneous">
    <text>Early fractionation of eukaryotic MCM proteins yielded a variety of dimeric, trimeric and tetrameric complexes with unclear biological significance. Specifically a MCM467 subcomplex is shown to have in vitro helicase activity which is inhibited by the MCM2 subunit. The MCM2-7 hexamer is the proposed physiological active complex.</text>
</comment>
<comment type="similarity">
    <text evidence="8">Belongs to the MCM family.</text>
</comment>
<evidence type="ECO:0000255" key="1"/>
<evidence type="ECO:0000256" key="2">
    <source>
        <dbReference type="SAM" id="MobiDB-lite"/>
    </source>
</evidence>
<evidence type="ECO:0000269" key="3">
    <source>
    </source>
</evidence>
<evidence type="ECO:0000269" key="4">
    <source>
    </source>
</evidence>
<evidence type="ECO:0000269" key="5">
    <source>
    </source>
</evidence>
<evidence type="ECO:0000269" key="6">
    <source>
    </source>
</evidence>
<evidence type="ECO:0000269" key="7">
    <source>
    </source>
</evidence>
<evidence type="ECO:0000305" key="8"/>
<evidence type="ECO:0007744" key="9">
    <source>
    </source>
</evidence>
<evidence type="ECO:0007744" key="10">
    <source>
    </source>
</evidence>
<evidence type="ECO:0007744" key="11">
    <source>
    </source>
</evidence>
<evidence type="ECO:0007829" key="12">
    <source>
        <dbReference type="PDB" id="6SKO"/>
    </source>
</evidence>
<evidence type="ECO:0007829" key="13">
    <source>
        <dbReference type="PDB" id="7PMK"/>
    </source>
</evidence>
<keyword id="KW-0002">3D-structure</keyword>
<keyword id="KW-0067">ATP-binding</keyword>
<keyword id="KW-0131">Cell cycle</keyword>
<keyword id="KW-0235">DNA replication</keyword>
<keyword id="KW-0238">DNA-binding</keyword>
<keyword id="KW-0347">Helicase</keyword>
<keyword id="KW-0378">Hydrolase</keyword>
<keyword id="KW-0547">Nucleotide-binding</keyword>
<keyword id="KW-0539">Nucleus</keyword>
<keyword id="KW-0597">Phosphoprotein</keyword>
<keyword id="KW-1185">Reference proteome</keyword>
<reference key="1">
    <citation type="submission" date="2003-03" db="EMBL/GenBank/DDBJ databases">
        <title>Sequence of the Saccharomyces cerevisiae MCM6 gene.</title>
        <authorList>
            <person name="Duina A.A."/>
            <person name="Winston F."/>
        </authorList>
    </citation>
    <scope>NUCLEOTIDE SEQUENCE [GENOMIC DNA]</scope>
    <source>
        <strain>ATCC 204508 / S288c</strain>
    </source>
</reference>
<reference key="2">
    <citation type="journal article" date="1997" name="Nature">
        <title>The nucleotide sequence of Saccharomyces cerevisiae chromosome VII.</title>
        <authorList>
            <person name="Tettelin H."/>
            <person name="Agostoni-Carbone M.L."/>
            <person name="Albermann K."/>
            <person name="Albers M."/>
            <person name="Arroyo J."/>
            <person name="Backes U."/>
            <person name="Barreiros T."/>
            <person name="Bertani I."/>
            <person name="Bjourson A.J."/>
            <person name="Brueckner M."/>
            <person name="Bruschi C.V."/>
            <person name="Carignani G."/>
            <person name="Castagnoli L."/>
            <person name="Cerdan E."/>
            <person name="Clemente M.L."/>
            <person name="Coblenz A."/>
            <person name="Coglievina M."/>
            <person name="Coissac E."/>
            <person name="Defoor E."/>
            <person name="Del Bino S."/>
            <person name="Delius H."/>
            <person name="Delneri D."/>
            <person name="de Wergifosse P."/>
            <person name="Dujon B."/>
            <person name="Durand P."/>
            <person name="Entian K.-D."/>
            <person name="Eraso P."/>
            <person name="Escribano V."/>
            <person name="Fabiani L."/>
            <person name="Fartmann B."/>
            <person name="Feroli F."/>
            <person name="Feuermann M."/>
            <person name="Frontali L."/>
            <person name="Garcia-Gonzalez M."/>
            <person name="Garcia-Saez M.I."/>
            <person name="Goffeau A."/>
            <person name="Guerreiro P."/>
            <person name="Hani J."/>
            <person name="Hansen M."/>
            <person name="Hebling U."/>
            <person name="Hernandez K."/>
            <person name="Heumann K."/>
            <person name="Hilger F."/>
            <person name="Hofmann B."/>
            <person name="Indge K.J."/>
            <person name="James C.M."/>
            <person name="Klima R."/>
            <person name="Koetter P."/>
            <person name="Kramer B."/>
            <person name="Kramer W."/>
            <person name="Lauquin G."/>
            <person name="Leuther H."/>
            <person name="Louis E.J."/>
            <person name="Maillier E."/>
            <person name="Marconi A."/>
            <person name="Martegani E."/>
            <person name="Mazon M.J."/>
            <person name="Mazzoni C."/>
            <person name="McReynolds A.D.K."/>
            <person name="Melchioretto P."/>
            <person name="Mewes H.-W."/>
            <person name="Minenkova O."/>
            <person name="Mueller-Auer S."/>
            <person name="Nawrocki A."/>
            <person name="Netter P."/>
            <person name="Neu R."/>
            <person name="Nombela C."/>
            <person name="Oliver S.G."/>
            <person name="Panzeri L."/>
            <person name="Paoluzi S."/>
            <person name="Plevani P."/>
            <person name="Portetelle D."/>
            <person name="Portillo F."/>
            <person name="Potier S."/>
            <person name="Purnelle B."/>
            <person name="Rieger M."/>
            <person name="Riles L."/>
            <person name="Rinaldi T."/>
            <person name="Robben J."/>
            <person name="Rodrigues-Pousada C."/>
            <person name="Rodriguez-Belmonte E."/>
            <person name="Rodriguez-Torres A.M."/>
            <person name="Rose M."/>
            <person name="Ruzzi M."/>
            <person name="Saliola M."/>
            <person name="Sanchez-Perez M."/>
            <person name="Schaefer B."/>
            <person name="Schaefer M."/>
            <person name="Scharfe M."/>
            <person name="Schmidheini T."/>
            <person name="Schreer A."/>
            <person name="Skala J."/>
            <person name="Souciet J.-L."/>
            <person name="Steensma H.Y."/>
            <person name="Talla E."/>
            <person name="Thierry A."/>
            <person name="Vandenbol M."/>
            <person name="van der Aart Q.J.M."/>
            <person name="Van Dyck L."/>
            <person name="Vanoni M."/>
            <person name="Verhasselt P."/>
            <person name="Voet M."/>
            <person name="Volckaert G."/>
            <person name="Wambutt R."/>
            <person name="Watson M.D."/>
            <person name="Weber N."/>
            <person name="Wedler E."/>
            <person name="Wedler H."/>
            <person name="Wipfli P."/>
            <person name="Wolf K."/>
            <person name="Wright L.F."/>
            <person name="Zaccaria P."/>
            <person name="Zimmermann M."/>
            <person name="Zollner A."/>
            <person name="Kleine K."/>
        </authorList>
    </citation>
    <scope>NUCLEOTIDE SEQUENCE [LARGE SCALE GENOMIC DNA]</scope>
    <source>
        <strain>ATCC 204508 / S288c</strain>
    </source>
</reference>
<reference key="3">
    <citation type="journal article" date="2007" name="J. Proteome Res.">
        <title>Large-scale phosphorylation analysis of alpha-factor-arrested Saccharomyces cerevisiae.</title>
        <authorList>
            <person name="Li X."/>
            <person name="Gerber S.A."/>
            <person name="Rudner A.D."/>
            <person name="Beausoleil S.A."/>
            <person name="Haas W."/>
            <person name="Villen J."/>
            <person name="Elias J.E."/>
            <person name="Gygi S.P."/>
        </authorList>
    </citation>
    <scope>PHOSPHORYLATION [LARGE SCALE ANALYSIS] AT THR-766</scope>
    <scope>IDENTIFICATION BY MASS SPECTROMETRY [LARGE SCALE ANALYSIS]</scope>
    <source>
        <strain>ADR376</strain>
    </source>
</reference>
<reference key="4">
    <citation type="journal article" date="2008" name="Mol. Cell">
        <title>The Mcm2-7 complex has in vitro helicase activity.</title>
        <authorList>
            <person name="Bochman M.L."/>
            <person name="Schwacha A."/>
        </authorList>
    </citation>
    <scope>RECONSTITUTION OF THE MCM2-7 COMPLEX</scope>
    <scope>HELICASE ACTIVITY OF THE MCM2-7 COMPLEX</scope>
    <scope>MUTAGENESIS OF LYS-581</scope>
</reference>
<reference key="5">
    <citation type="journal article" date="2008" name="Mol. Cell. Proteomics">
        <title>A multidimensional chromatography technology for in-depth phosphoproteome analysis.</title>
        <authorList>
            <person name="Albuquerque C.P."/>
            <person name="Smolka M.B."/>
            <person name="Payne S.H."/>
            <person name="Bafna V."/>
            <person name="Eng J."/>
            <person name="Zhou H."/>
        </authorList>
    </citation>
    <scope>PHOSPHORYLATION [LARGE SCALE ANALYSIS] AT SER-78 AND SER-372</scope>
    <scope>IDENTIFICATION BY MASS SPECTROMETRY [LARGE SCALE ANALYSIS]</scope>
</reference>
<reference key="6">
    <citation type="journal article" date="2009" name="Cell">
        <title>Concerted loading of Mcm2-7 double hexamers around DNA during DNA replication origin licensing.</title>
        <authorList>
            <person name="Remus D."/>
            <person name="Beuron F."/>
            <person name="Tolun G."/>
            <person name="Griffith J.D."/>
            <person name="Morris E.P."/>
            <person name="Diffley J.F."/>
        </authorList>
    </citation>
    <scope>IDENTIFICATION IN THE MCM2-7 COMPLEX</scope>
    <scope>FUNCTION OF THE MCM2-7 COMPLEX</scope>
    <scope>ELECTRON MICROSCOPY OF THE MCM2-7 COMPLEX</scope>
</reference>
<reference key="7">
    <citation type="journal article" date="2009" name="Proc. Natl. Acad. Sci. U.S.A.">
        <title>A double-hexameric MCM2-7 complex is loaded onto origin DNA during licensing of eukaryotic DNA replication.</title>
        <authorList>
            <person name="Evrin C."/>
            <person name="Clarke P."/>
            <person name="Zech J."/>
            <person name="Lurz R."/>
            <person name="Sun J."/>
            <person name="Uhle S."/>
            <person name="Li H."/>
            <person name="Stillman B."/>
            <person name="Speck C."/>
        </authorList>
    </citation>
    <scope>IDENTIFICATION IN THE MCM2-7 COMPLEX</scope>
    <scope>FUNCTION OF THE MCM2-7 COMPLEX</scope>
    <scope>ELECTRON MICROSCOPY OF THE MCM2-7 COMPLEX</scope>
</reference>
<reference key="8">
    <citation type="journal article" date="2014" name="G3 (Bethesda)">
        <title>The reference genome sequence of Saccharomyces cerevisiae: Then and now.</title>
        <authorList>
            <person name="Engel S.R."/>
            <person name="Dietrich F.S."/>
            <person name="Fisk D.G."/>
            <person name="Binkley G."/>
            <person name="Balakrishnan R."/>
            <person name="Costanzo M.C."/>
            <person name="Dwight S.S."/>
            <person name="Hitz B.C."/>
            <person name="Karra K."/>
            <person name="Nash R.S."/>
            <person name="Weng S."/>
            <person name="Wong E.D."/>
            <person name="Lloyd P."/>
            <person name="Skrzypek M.S."/>
            <person name="Miyasato S.R."/>
            <person name="Simison M."/>
            <person name="Cherry J.M."/>
        </authorList>
    </citation>
    <scope>GENOME REANNOTATION</scope>
    <source>
        <strain>ATCC 204508 / S288c</strain>
    </source>
</reference>
<reference key="9">
    <citation type="journal article" date="1998" name="Mol. Gen. Genet.">
        <title>Characterisation of Saccharomyces cerevisiae ARO8 and ARO9 genes encoding aromatic aminotransferases I and II reveals a new aminotransferase subfamily.</title>
        <authorList>
            <person name="Iraqui I."/>
            <person name="Vissers S."/>
            <person name="Cartiaux M."/>
            <person name="Urrestarazu A."/>
        </authorList>
    </citation>
    <scope>NUCLEOTIDE SEQUENCE [GENOMIC DNA] OF 456-1017</scope>
    <source>
        <strain>Sigma 1278B</strain>
    </source>
</reference>
<reference key="10">
    <citation type="journal article" date="1997" name="Mol. Cell. Biol.">
        <title>A lesion in the DNA replication initiation factor Mcm10 induces pausing of elongation forks through chromosomal replication origins in Saccharomyces cerevisiae.</title>
        <authorList>
            <person name="Merchant A.M."/>
            <person name="Kawasaki Y."/>
            <person name="Chen Y."/>
            <person name="Lei M."/>
            <person name="Tye B.K."/>
        </authorList>
    </citation>
    <scope>INTERACTION WITH MCM10</scope>
</reference>
<reference key="11">
    <citation type="journal article" date="2003" name="Nature">
        <title>Global analysis of protein expression in yeast.</title>
        <authorList>
            <person name="Ghaemmaghami S."/>
            <person name="Huh W.-K."/>
            <person name="Bower K."/>
            <person name="Howson R.W."/>
            <person name="Belle A."/>
            <person name="Dephoure N."/>
            <person name="O'Shea E.K."/>
            <person name="Weissman J.S."/>
        </authorList>
    </citation>
    <scope>LEVEL OF PROTEIN EXPRESSION [LARGE SCALE ANALYSIS]</scope>
</reference>
<reference key="12">
    <citation type="journal article" date="2009" name="Science">
        <title>Global analysis of Cdk1 substrate phosphorylation sites provides insights into evolution.</title>
        <authorList>
            <person name="Holt L.J."/>
            <person name="Tuch B.B."/>
            <person name="Villen J."/>
            <person name="Johnson A.D."/>
            <person name="Gygi S.P."/>
            <person name="Morgan D.O."/>
        </authorList>
    </citation>
    <scope>PHOSPHORYLATION [LARGE SCALE ANALYSIS] AT SER-249</scope>
    <scope>IDENTIFICATION BY MASS SPECTROMETRY [LARGE SCALE ANALYSIS]</scope>
</reference>
<protein>
    <recommendedName>
        <fullName>DNA replication licensing factor MCM6</fullName>
        <ecNumber>3.6.4.12</ecNumber>
    </recommendedName>
    <alternativeName>
        <fullName>Minichromosome maintenance protein 6</fullName>
    </alternativeName>
</protein>
<gene>
    <name type="primary">MCM6</name>
    <name type="ordered locus">YGL201C</name>
</gene>
<feature type="chain" id="PRO_0000194117" description="DNA replication licensing factor MCM6">
    <location>
        <begin position="1"/>
        <end position="1017"/>
    </location>
</feature>
<feature type="domain" description="MCM">
    <location>
        <begin position="525"/>
        <end position="732"/>
    </location>
</feature>
<feature type="region of interest" description="Disordered" evidence="2">
    <location>
        <begin position="1"/>
        <end position="94"/>
    </location>
</feature>
<feature type="region of interest" description="Disordered" evidence="2">
    <location>
        <begin position="200"/>
        <end position="257"/>
    </location>
</feature>
<feature type="region of interest" description="Disordered" evidence="2">
    <location>
        <begin position="852"/>
        <end position="901"/>
    </location>
</feature>
<feature type="short sequence motif" description="Arginine finger">
    <location>
        <begin position="707"/>
        <end position="710"/>
    </location>
</feature>
<feature type="compositionally biased region" description="Low complexity" evidence="2">
    <location>
        <begin position="24"/>
        <end position="34"/>
    </location>
</feature>
<feature type="compositionally biased region" description="Polar residues" evidence="2">
    <location>
        <begin position="35"/>
        <end position="83"/>
    </location>
</feature>
<feature type="compositionally biased region" description="Acidic residues" evidence="2">
    <location>
        <begin position="209"/>
        <end position="223"/>
    </location>
</feature>
<feature type="compositionally biased region" description="Polar residues" evidence="2">
    <location>
        <begin position="224"/>
        <end position="257"/>
    </location>
</feature>
<feature type="binding site" evidence="1">
    <location>
        <begin position="575"/>
        <end position="582"/>
    </location>
    <ligand>
        <name>ATP</name>
        <dbReference type="ChEBI" id="CHEBI:30616"/>
    </ligand>
</feature>
<feature type="modified residue" description="Phosphoserine" evidence="10">
    <location>
        <position position="78"/>
    </location>
</feature>
<feature type="modified residue" description="Phosphoserine" evidence="11">
    <location>
        <position position="249"/>
    </location>
</feature>
<feature type="modified residue" description="Phosphoserine" evidence="10">
    <location>
        <position position="372"/>
    </location>
</feature>
<feature type="modified residue" description="Phosphothreonine" evidence="9">
    <location>
        <position position="766"/>
    </location>
</feature>
<feature type="mutagenesis site" description="Loss of MCM2-7 complex helicase activity." evidence="4">
    <original>K</original>
    <variation>A</variation>
    <location>
        <position position="581"/>
    </location>
</feature>
<feature type="sequence conflict" description="In Ref. 2; CAA96913." evidence="8" ref="2">
    <original>P</original>
    <variation>A</variation>
    <location>
        <position position="179"/>
    </location>
</feature>
<feature type="strand" evidence="13">
    <location>
        <begin position="94"/>
        <end position="97"/>
    </location>
</feature>
<feature type="helix" evidence="13">
    <location>
        <begin position="106"/>
        <end position="121"/>
    </location>
</feature>
<feature type="helix" evidence="13">
    <location>
        <begin position="135"/>
        <end position="145"/>
    </location>
</feature>
<feature type="strand" evidence="13">
    <location>
        <begin position="150"/>
        <end position="154"/>
    </location>
</feature>
<feature type="helix" evidence="13">
    <location>
        <begin position="155"/>
        <end position="160"/>
    </location>
</feature>
<feature type="helix" evidence="13">
    <location>
        <begin position="161"/>
        <end position="164"/>
    </location>
</feature>
<feature type="helix" evidence="13">
    <location>
        <begin position="165"/>
        <end position="172"/>
    </location>
</feature>
<feature type="helix" evidence="13">
    <location>
        <begin position="174"/>
        <end position="192"/>
    </location>
</feature>
<feature type="helix" evidence="13">
    <location>
        <begin position="194"/>
        <end position="197"/>
    </location>
</feature>
<feature type="strand" evidence="13">
    <location>
        <begin position="264"/>
        <end position="268"/>
    </location>
</feature>
<feature type="helix" evidence="13">
    <location>
        <begin position="276"/>
        <end position="278"/>
    </location>
</feature>
<feature type="helix" evidence="13">
    <location>
        <begin position="281"/>
        <end position="283"/>
    </location>
</feature>
<feature type="strand" evidence="13">
    <location>
        <begin position="286"/>
        <end position="297"/>
    </location>
</feature>
<feature type="strand" evidence="13">
    <location>
        <begin position="301"/>
        <end position="314"/>
    </location>
</feature>
<feature type="strand" evidence="13">
    <location>
        <begin position="317"/>
        <end position="322"/>
    </location>
</feature>
<feature type="strand" evidence="13">
    <location>
        <begin position="344"/>
        <end position="346"/>
    </location>
</feature>
<feature type="turn" evidence="13">
    <location>
        <begin position="348"/>
        <end position="350"/>
    </location>
</feature>
<feature type="strand" evidence="13">
    <location>
        <begin position="351"/>
        <end position="362"/>
    </location>
</feature>
<feature type="turn" evidence="13">
    <location>
        <begin position="365"/>
        <end position="367"/>
    </location>
</feature>
<feature type="strand" evidence="13">
    <location>
        <begin position="369"/>
        <end position="371"/>
    </location>
</feature>
<feature type="strand" evidence="13">
    <location>
        <begin position="376"/>
        <end position="382"/>
    </location>
</feature>
<feature type="helix" evidence="13">
    <location>
        <begin position="383"/>
        <end position="385"/>
    </location>
</feature>
<feature type="strand" evidence="13">
    <location>
        <begin position="394"/>
        <end position="405"/>
    </location>
</feature>
<feature type="turn" evidence="13">
    <location>
        <begin position="407"/>
        <end position="410"/>
    </location>
</feature>
<feature type="turn" evidence="13">
    <location>
        <begin position="441"/>
        <end position="445"/>
    </location>
</feature>
<feature type="strand" evidence="13">
    <location>
        <begin position="450"/>
        <end position="461"/>
    </location>
</feature>
<feature type="helix" evidence="13">
    <location>
        <begin position="501"/>
        <end position="505"/>
    </location>
</feature>
<feature type="helix" evidence="13">
    <location>
        <begin position="510"/>
        <end position="520"/>
    </location>
</feature>
<feature type="helix" evidence="13">
    <location>
        <begin position="525"/>
        <end position="532"/>
    </location>
</feature>
<feature type="helix" evidence="13">
    <location>
        <begin position="541"/>
        <end position="551"/>
    </location>
</feature>
<feature type="strand" evidence="13">
    <location>
        <begin position="571"/>
        <end position="575"/>
    </location>
</feature>
<feature type="helix" evidence="13">
    <location>
        <begin position="582"/>
        <end position="591"/>
    </location>
</feature>
<feature type="strand" evidence="13">
    <location>
        <begin position="592"/>
        <end position="599"/>
    </location>
</feature>
<feature type="turn" evidence="13">
    <location>
        <begin position="600"/>
        <end position="602"/>
    </location>
</feature>
<feature type="helix" evidence="13">
    <location>
        <begin position="605"/>
        <end position="608"/>
    </location>
</feature>
<feature type="strand" evidence="13">
    <location>
        <begin position="609"/>
        <end position="613"/>
    </location>
</feature>
<feature type="strand" evidence="13">
    <location>
        <begin position="622"/>
        <end position="625"/>
    </location>
</feature>
<feature type="helix" evidence="13">
    <location>
        <begin position="627"/>
        <end position="630"/>
    </location>
</feature>
<feature type="turn" evidence="13">
    <location>
        <begin position="631"/>
        <end position="633"/>
    </location>
</feature>
<feature type="strand" evidence="13">
    <location>
        <begin position="634"/>
        <end position="639"/>
    </location>
</feature>
<feature type="helix" evidence="13">
    <location>
        <begin position="641"/>
        <end position="643"/>
    </location>
</feature>
<feature type="helix" evidence="13">
    <location>
        <begin position="646"/>
        <end position="650"/>
    </location>
</feature>
<feature type="helix" evidence="13">
    <location>
        <begin position="653"/>
        <end position="657"/>
    </location>
</feature>
<feature type="strand" evidence="13">
    <location>
        <begin position="659"/>
        <end position="665"/>
    </location>
</feature>
<feature type="strand" evidence="13">
    <location>
        <begin position="668"/>
        <end position="673"/>
    </location>
</feature>
<feature type="strand" evidence="13">
    <location>
        <begin position="676"/>
        <end position="681"/>
    </location>
</feature>
<feature type="turn" evidence="13">
    <location>
        <begin position="695"/>
        <end position="698"/>
    </location>
</feature>
<feature type="helix" evidence="13">
    <location>
        <begin position="703"/>
        <end position="706"/>
    </location>
</feature>
<feature type="strand" evidence="13">
    <location>
        <begin position="709"/>
        <end position="715"/>
    </location>
</feature>
<feature type="helix" evidence="13">
    <location>
        <begin position="721"/>
        <end position="734"/>
    </location>
</feature>
<feature type="helix" evidence="12">
    <location>
        <begin position="738"/>
        <end position="740"/>
    </location>
</feature>
<feature type="helix" evidence="13">
    <location>
        <begin position="748"/>
        <end position="758"/>
    </location>
</feature>
<feature type="helix" evidence="13">
    <location>
        <begin position="767"/>
        <end position="784"/>
    </location>
</feature>
<feature type="turn" evidence="13">
    <location>
        <begin position="787"/>
        <end position="790"/>
    </location>
</feature>
<feature type="helix" evidence="13">
    <location>
        <begin position="797"/>
        <end position="813"/>
    </location>
</feature>
<feature type="strand" evidence="13">
    <location>
        <begin position="817"/>
        <end position="819"/>
    </location>
</feature>
<feature type="helix" evidence="13">
    <location>
        <begin position="821"/>
        <end position="835"/>
    </location>
</feature>
<organism>
    <name type="scientific">Saccharomyces cerevisiae (strain ATCC 204508 / S288c)</name>
    <name type="common">Baker's yeast</name>
    <dbReference type="NCBI Taxonomy" id="559292"/>
    <lineage>
        <taxon>Eukaryota</taxon>
        <taxon>Fungi</taxon>
        <taxon>Dikarya</taxon>
        <taxon>Ascomycota</taxon>
        <taxon>Saccharomycotina</taxon>
        <taxon>Saccharomycetes</taxon>
        <taxon>Saccharomycetales</taxon>
        <taxon>Saccharomycetaceae</taxon>
        <taxon>Saccharomyces</taxon>
    </lineage>
</organism>
<dbReference type="EC" id="3.6.4.12"/>
<dbReference type="EMBL" id="AY258324">
    <property type="protein sequence ID" value="AAO89010.1"/>
    <property type="molecule type" value="Genomic_DNA"/>
</dbReference>
<dbReference type="EMBL" id="Z72723">
    <property type="protein sequence ID" value="CAA96913.1"/>
    <property type="molecule type" value="Genomic_DNA"/>
</dbReference>
<dbReference type="EMBL" id="Y13624">
    <property type="protein sequence ID" value="CAA73947.1"/>
    <property type="molecule type" value="Genomic_DNA"/>
</dbReference>
<dbReference type="EMBL" id="BK006941">
    <property type="protein sequence ID" value="DAA07914.1"/>
    <property type="molecule type" value="Genomic_DNA"/>
</dbReference>
<dbReference type="PIR" id="S64219">
    <property type="entry name" value="S64219"/>
</dbReference>
<dbReference type="RefSeq" id="NP_011314.2">
    <property type="nucleotide sequence ID" value="NM_001181066.1"/>
</dbReference>
<dbReference type="PDB" id="3JA8">
    <property type="method" value="EM"/>
    <property type="resolution" value="3.80 A"/>
    <property type="chains" value="6=1-1017"/>
</dbReference>
<dbReference type="PDB" id="3JC5">
    <property type="method" value="EM"/>
    <property type="resolution" value="4.70 A"/>
    <property type="chains" value="6=1-1017"/>
</dbReference>
<dbReference type="PDB" id="3JC6">
    <property type="method" value="EM"/>
    <property type="resolution" value="3.70 A"/>
    <property type="chains" value="6=1-1017"/>
</dbReference>
<dbReference type="PDB" id="3JC7">
    <property type="method" value="EM"/>
    <property type="resolution" value="4.80 A"/>
    <property type="chains" value="6=1-1017"/>
</dbReference>
<dbReference type="PDB" id="5BK4">
    <property type="method" value="EM"/>
    <property type="resolution" value="3.90 A"/>
    <property type="chains" value="6/E=1-1017"/>
</dbReference>
<dbReference type="PDB" id="5U8S">
    <property type="method" value="EM"/>
    <property type="resolution" value="6.10 A"/>
    <property type="chains" value="6=1-1017"/>
</dbReference>
<dbReference type="PDB" id="5U8T">
    <property type="method" value="EM"/>
    <property type="resolution" value="4.90 A"/>
    <property type="chains" value="6=1-1017"/>
</dbReference>
<dbReference type="PDB" id="5V8F">
    <property type="method" value="EM"/>
    <property type="resolution" value="3.90 A"/>
    <property type="chains" value="6=1-1017"/>
</dbReference>
<dbReference type="PDB" id="5XF8">
    <property type="method" value="EM"/>
    <property type="resolution" value="7.10 A"/>
    <property type="chains" value="6=1-1017"/>
</dbReference>
<dbReference type="PDB" id="6EYC">
    <property type="method" value="EM"/>
    <property type="resolution" value="3.80 A"/>
    <property type="chains" value="6=1-1017"/>
</dbReference>
<dbReference type="PDB" id="6F0L">
    <property type="method" value="EM"/>
    <property type="resolution" value="4.77 A"/>
    <property type="chains" value="6/E=1-1017"/>
</dbReference>
<dbReference type="PDB" id="6HV9">
    <property type="method" value="EM"/>
    <property type="resolution" value="4.98 A"/>
    <property type="chains" value="6=1-1017"/>
</dbReference>
<dbReference type="PDB" id="6PTJ">
    <property type="method" value="EM"/>
    <property type="resolution" value="3.80 A"/>
    <property type="chains" value="6=1-1017"/>
</dbReference>
<dbReference type="PDB" id="6PTN">
    <property type="method" value="EM"/>
    <property type="resolution" value="5.80 A"/>
    <property type="chains" value="6/m=1-1017"/>
</dbReference>
<dbReference type="PDB" id="6PTO">
    <property type="method" value="EM"/>
    <property type="resolution" value="7.00 A"/>
    <property type="chains" value="6/J/l=1-1017"/>
</dbReference>
<dbReference type="PDB" id="6RQC">
    <property type="method" value="EM"/>
    <property type="resolution" value="4.40 A"/>
    <property type="chains" value="6=1-1017"/>
</dbReference>
<dbReference type="PDB" id="6SKL">
    <property type="method" value="EM"/>
    <property type="resolution" value="3.70 A"/>
    <property type="chains" value="6=1-1017"/>
</dbReference>
<dbReference type="PDB" id="6SKO">
    <property type="method" value="EM"/>
    <property type="resolution" value="3.40 A"/>
    <property type="chains" value="6=1-1017"/>
</dbReference>
<dbReference type="PDB" id="6U0M">
    <property type="method" value="EM"/>
    <property type="resolution" value="3.90 A"/>
    <property type="chains" value="6=103-840"/>
</dbReference>
<dbReference type="PDB" id="6WGF">
    <property type="method" value="EM"/>
    <property type="resolution" value="7.70 A"/>
    <property type="chains" value="6=1-1017"/>
</dbReference>
<dbReference type="PDB" id="6WGG">
    <property type="method" value="EM"/>
    <property type="resolution" value="8.10 A"/>
    <property type="chains" value="6=1-1017"/>
</dbReference>
<dbReference type="PDB" id="6WGI">
    <property type="method" value="EM"/>
    <property type="resolution" value="10.00 A"/>
    <property type="chains" value="6=1-1017"/>
</dbReference>
<dbReference type="PDB" id="7P30">
    <property type="method" value="EM"/>
    <property type="resolution" value="3.00 A"/>
    <property type="chains" value="6/E=1-1017"/>
</dbReference>
<dbReference type="PDB" id="7P5Z">
    <property type="method" value="EM"/>
    <property type="resolution" value="3.30 A"/>
    <property type="chains" value="6/E=1-1017"/>
</dbReference>
<dbReference type="PDB" id="7PMK">
    <property type="method" value="EM"/>
    <property type="resolution" value="3.20 A"/>
    <property type="chains" value="6=1-1017"/>
</dbReference>
<dbReference type="PDB" id="7PMN">
    <property type="method" value="EM"/>
    <property type="resolution" value="3.20 A"/>
    <property type="chains" value="6=1-1017"/>
</dbReference>
<dbReference type="PDB" id="7PT6">
    <property type="method" value="EM"/>
    <property type="resolution" value="3.20 A"/>
    <property type="chains" value="6/F=1-1017"/>
</dbReference>
<dbReference type="PDB" id="7PT7">
    <property type="method" value="EM"/>
    <property type="resolution" value="3.80 A"/>
    <property type="chains" value="6/F=1-1017"/>
</dbReference>
<dbReference type="PDB" id="7QHS">
    <property type="method" value="EM"/>
    <property type="resolution" value="3.30 A"/>
    <property type="chains" value="6=1-1017"/>
</dbReference>
<dbReference type="PDB" id="7V3U">
    <property type="method" value="EM"/>
    <property type="resolution" value="3.20 A"/>
    <property type="chains" value="6/F=1-1017"/>
</dbReference>
<dbReference type="PDB" id="7V3V">
    <property type="method" value="EM"/>
    <property type="resolution" value="2.90 A"/>
    <property type="chains" value="6/F=1-1017"/>
</dbReference>
<dbReference type="PDB" id="7W8G">
    <property type="method" value="EM"/>
    <property type="resolution" value="2.52 A"/>
    <property type="chains" value="6/F=1-1017"/>
</dbReference>
<dbReference type="PDB" id="7Z13">
    <property type="method" value="EM"/>
    <property type="resolution" value="3.40 A"/>
    <property type="chains" value="6/e=1-1017"/>
</dbReference>
<dbReference type="PDB" id="8B9A">
    <property type="method" value="EM"/>
    <property type="resolution" value="3.50 A"/>
    <property type="chains" value="6=1-1017"/>
</dbReference>
<dbReference type="PDB" id="8B9B">
    <property type="method" value="EM"/>
    <property type="resolution" value="3.50 A"/>
    <property type="chains" value="6=1-1017"/>
</dbReference>
<dbReference type="PDB" id="8B9C">
    <property type="method" value="EM"/>
    <property type="resolution" value="4.60 A"/>
    <property type="chains" value="6=1-1017"/>
</dbReference>
<dbReference type="PDB" id="8KG6">
    <property type="method" value="EM"/>
    <property type="resolution" value="3.07 A"/>
    <property type="chains" value="6=1-1017"/>
</dbReference>
<dbReference type="PDB" id="8KG8">
    <property type="method" value="EM"/>
    <property type="resolution" value="4.23 A"/>
    <property type="chains" value="6=1-1017"/>
</dbReference>
<dbReference type="PDB" id="8KG9">
    <property type="method" value="EM"/>
    <property type="resolution" value="4.52 A"/>
    <property type="chains" value="6=1-1017"/>
</dbReference>
<dbReference type="PDB" id="8P5E">
    <property type="method" value="EM"/>
    <property type="resolution" value="3.90 A"/>
    <property type="chains" value="6=1-1017"/>
</dbReference>
<dbReference type="PDB" id="8P62">
    <property type="method" value="EM"/>
    <property type="resolution" value="3.90 A"/>
    <property type="chains" value="6=1-1017"/>
</dbReference>
<dbReference type="PDB" id="8P63">
    <property type="method" value="EM"/>
    <property type="resolution" value="3.70 A"/>
    <property type="chains" value="6=1-1017"/>
</dbReference>
<dbReference type="PDB" id="8RIF">
    <property type="method" value="EM"/>
    <property type="resolution" value="2.79 A"/>
    <property type="chains" value="6/E=1-1017"/>
</dbReference>
<dbReference type="PDB" id="8RIG">
    <property type="method" value="EM"/>
    <property type="resolution" value="3.41 A"/>
    <property type="chains" value="6=1-1017"/>
</dbReference>
<dbReference type="PDB" id="8W7M">
    <property type="method" value="EM"/>
    <property type="resolution" value="4.12 A"/>
    <property type="chains" value="6=1-1017"/>
</dbReference>
<dbReference type="PDB" id="8W7S">
    <property type="method" value="EM"/>
    <property type="resolution" value="7.39 A"/>
    <property type="chains" value="6=1-1017"/>
</dbReference>
<dbReference type="PDB" id="8XGC">
    <property type="method" value="EM"/>
    <property type="resolution" value="3.70 A"/>
    <property type="chains" value="6=1-1017"/>
</dbReference>
<dbReference type="PDB" id="9BCX">
    <property type="method" value="EM"/>
    <property type="resolution" value="6.10 A"/>
    <property type="chains" value="6=1-1017"/>
</dbReference>
<dbReference type="PDB" id="9GJP">
    <property type="method" value="EM"/>
    <property type="resolution" value="3.40 A"/>
    <property type="chains" value="6=1-1017"/>
</dbReference>
<dbReference type="PDB" id="9GJW">
    <property type="method" value="EM"/>
    <property type="resolution" value="3.30 A"/>
    <property type="chains" value="6=1-1017"/>
</dbReference>
<dbReference type="PDB" id="9GM5">
    <property type="method" value="EM"/>
    <property type="resolution" value="3.70 A"/>
    <property type="chains" value="6=1-1017"/>
</dbReference>
<dbReference type="PDBsum" id="3JA8"/>
<dbReference type="PDBsum" id="3JC5"/>
<dbReference type="PDBsum" id="3JC6"/>
<dbReference type="PDBsum" id="3JC7"/>
<dbReference type="PDBsum" id="5BK4"/>
<dbReference type="PDBsum" id="5U8S"/>
<dbReference type="PDBsum" id="5U8T"/>
<dbReference type="PDBsum" id="5V8F"/>
<dbReference type="PDBsum" id="5XF8"/>
<dbReference type="PDBsum" id="6EYC"/>
<dbReference type="PDBsum" id="6F0L"/>
<dbReference type="PDBsum" id="6HV9"/>
<dbReference type="PDBsum" id="6PTJ"/>
<dbReference type="PDBsum" id="6PTN"/>
<dbReference type="PDBsum" id="6PTO"/>
<dbReference type="PDBsum" id="6RQC"/>
<dbReference type="PDBsum" id="6SKL"/>
<dbReference type="PDBsum" id="6SKO"/>
<dbReference type="PDBsum" id="6U0M"/>
<dbReference type="PDBsum" id="6WGF"/>
<dbReference type="PDBsum" id="6WGG"/>
<dbReference type="PDBsum" id="6WGI"/>
<dbReference type="PDBsum" id="7P30"/>
<dbReference type="PDBsum" id="7P5Z"/>
<dbReference type="PDBsum" id="7PMK"/>
<dbReference type="PDBsum" id="7PMN"/>
<dbReference type="PDBsum" id="7PT6"/>
<dbReference type="PDBsum" id="7PT7"/>
<dbReference type="PDBsum" id="7QHS"/>
<dbReference type="PDBsum" id="7V3U"/>
<dbReference type="PDBsum" id="7V3V"/>
<dbReference type="PDBsum" id="7W8G"/>
<dbReference type="PDBsum" id="7Z13"/>
<dbReference type="PDBsum" id="8B9A"/>
<dbReference type="PDBsum" id="8B9B"/>
<dbReference type="PDBsum" id="8B9C"/>
<dbReference type="PDBsum" id="8KG6"/>
<dbReference type="PDBsum" id="8KG8"/>
<dbReference type="PDBsum" id="8KG9"/>
<dbReference type="PDBsum" id="8P5E"/>
<dbReference type="PDBsum" id="8P62"/>
<dbReference type="PDBsum" id="8P63"/>
<dbReference type="PDBsum" id="8RIF"/>
<dbReference type="PDBsum" id="8RIG"/>
<dbReference type="PDBsum" id="8W7M"/>
<dbReference type="PDBsum" id="8W7S"/>
<dbReference type="PDBsum" id="8XGC"/>
<dbReference type="PDBsum" id="9BCX"/>
<dbReference type="PDBsum" id="9GJP"/>
<dbReference type="PDBsum" id="9GJW"/>
<dbReference type="PDBsum" id="9GM5"/>
<dbReference type="EMDB" id="EMD-0288"/>
<dbReference type="EMDB" id="EMD-10227"/>
<dbReference type="EMDB" id="EMD-10230"/>
<dbReference type="EMDB" id="EMD-13176"/>
<dbReference type="EMDB" id="EMD-13211"/>
<dbReference type="EMDB" id="EMD-13537"/>
<dbReference type="EMDB" id="EMD-13539"/>
<dbReference type="EMDB" id="EMD-13619"/>
<dbReference type="EMDB" id="EMD-13620"/>
<dbReference type="EMDB" id="EMD-13624"/>
<dbReference type="EMDB" id="EMD-13629"/>
<dbReference type="EMDB" id="EMD-13640"/>
<dbReference type="EMDB" id="EMD-13644"/>
<dbReference type="EMDB" id="EMD-13647"/>
<dbReference type="EMDB" id="EMD-13648"/>
<dbReference type="EMDB" id="EMD-13656"/>
<dbReference type="EMDB" id="EMD-13978"/>
<dbReference type="EMDB" id="EMD-14439"/>
<dbReference type="EMDB" id="EMD-15924"/>
<dbReference type="EMDB" id="EMD-17449"/>
<dbReference type="EMDB" id="EMD-17458"/>
<dbReference type="EMDB" id="EMD-17459"/>
<dbReference type="EMDB" id="EMD-19186"/>
<dbReference type="EMDB" id="EMD-19187"/>
<dbReference type="EMDB" id="EMD-20471"/>
<dbReference type="EMDB" id="EMD-20472"/>
<dbReference type="EMDB" id="EMD-20473"/>
<dbReference type="EMDB" id="EMD-20607"/>
<dbReference type="EMDB" id="EMD-21664"/>
<dbReference type="EMDB" id="EMD-21665"/>
<dbReference type="EMDB" id="EMD-21666"/>
<dbReference type="EMDB" id="EMD-31684"/>
<dbReference type="EMDB" id="EMD-31685"/>
<dbReference type="EMDB" id="EMD-32355"/>
<dbReference type="EMDB" id="EMD-37211"/>
<dbReference type="EMDB" id="EMD-37213"/>
<dbReference type="EMDB" id="EMD-37215"/>
<dbReference type="EMDB" id="EMD-37343"/>
<dbReference type="EMDB" id="EMD-37345"/>
<dbReference type="EMDB" id="EMD-38317"/>
<dbReference type="EMDB" id="EMD-44441"/>
<dbReference type="EMDB" id="EMD-4980"/>
<dbReference type="EMDB" id="EMD-51401"/>
<dbReference type="EMDB" id="EMD-51407"/>
<dbReference type="EMDB" id="EMD-51441"/>
<dbReference type="EMDB" id="EMD-6671"/>
<dbReference type="EMDB" id="EMD-8518"/>
<dbReference type="EMDB" id="EMD-8519"/>
<dbReference type="EMDB" id="EMD-8540"/>
<dbReference type="EMDB" id="EMD-9400"/>
<dbReference type="SMR" id="P53091"/>
<dbReference type="BioGRID" id="33056">
    <property type="interactions" value="217"/>
</dbReference>
<dbReference type="ComplexPortal" id="CPX-2944">
    <property type="entry name" value="MCM complex"/>
</dbReference>
<dbReference type="DIP" id="DIP-1294N"/>
<dbReference type="FunCoup" id="P53091">
    <property type="interactions" value="1479"/>
</dbReference>
<dbReference type="IntAct" id="P53091">
    <property type="interactions" value="68"/>
</dbReference>
<dbReference type="MINT" id="P53091"/>
<dbReference type="STRING" id="4932.YGL201C"/>
<dbReference type="GlyGen" id="P53091">
    <property type="glycosylation" value="2 sites, 1 O-linked glycan (2 sites)"/>
</dbReference>
<dbReference type="iPTMnet" id="P53091"/>
<dbReference type="PaxDb" id="4932-YGL201C"/>
<dbReference type="PeptideAtlas" id="P53091"/>
<dbReference type="EnsemblFungi" id="YGL201C_mRNA">
    <property type="protein sequence ID" value="YGL201C"/>
    <property type="gene ID" value="YGL201C"/>
</dbReference>
<dbReference type="GeneID" id="852673"/>
<dbReference type="KEGG" id="sce:YGL201C"/>
<dbReference type="AGR" id="SGD:S000003169"/>
<dbReference type="SGD" id="S000003169">
    <property type="gene designation" value="MCM6"/>
</dbReference>
<dbReference type="VEuPathDB" id="FungiDB:YGL201C"/>
<dbReference type="eggNOG" id="KOG0480">
    <property type="taxonomic scope" value="Eukaryota"/>
</dbReference>
<dbReference type="GeneTree" id="ENSGT01050000244824"/>
<dbReference type="HOGENOM" id="CLU_000995_3_0_1"/>
<dbReference type="InParanoid" id="P53091"/>
<dbReference type="OMA" id="RHQQTDK"/>
<dbReference type="OrthoDB" id="1744952at2759"/>
<dbReference type="BioCyc" id="YEAST:G3O-30681-MONOMER"/>
<dbReference type="Reactome" id="R-SCE-176187">
    <property type="pathway name" value="Activation of ATR in response to replication stress"/>
</dbReference>
<dbReference type="Reactome" id="R-SCE-68867">
    <property type="pathway name" value="Assembly of the pre-replicative complex"/>
</dbReference>
<dbReference type="Reactome" id="R-SCE-68962">
    <property type="pathway name" value="Activation of the pre-replicative complex"/>
</dbReference>
<dbReference type="Reactome" id="R-SCE-69052">
    <property type="pathway name" value="Switching of origins to a post-replicative state"/>
</dbReference>
<dbReference type="BioGRID-ORCS" id="852673">
    <property type="hits" value="2 hits in 10 CRISPR screens"/>
</dbReference>
<dbReference type="CD-CODE" id="E03F929F">
    <property type="entry name" value="Stress granule"/>
</dbReference>
<dbReference type="EvolutionaryTrace" id="P53091"/>
<dbReference type="PRO" id="PR:P53091"/>
<dbReference type="Proteomes" id="UP000002311">
    <property type="component" value="Chromosome VII"/>
</dbReference>
<dbReference type="RNAct" id="P53091">
    <property type="molecule type" value="protein"/>
</dbReference>
<dbReference type="GO" id="GO:0071162">
    <property type="term" value="C:CMG complex"/>
    <property type="evidence" value="ECO:0000314"/>
    <property type="project" value="SGD"/>
</dbReference>
<dbReference type="GO" id="GO:0005737">
    <property type="term" value="C:cytoplasm"/>
    <property type="evidence" value="ECO:0000314"/>
    <property type="project" value="SGD"/>
</dbReference>
<dbReference type="GO" id="GO:0031261">
    <property type="term" value="C:DNA replication preinitiation complex"/>
    <property type="evidence" value="ECO:0000314"/>
    <property type="project" value="SGD"/>
</dbReference>
<dbReference type="GO" id="GO:0042555">
    <property type="term" value="C:MCM complex"/>
    <property type="evidence" value="ECO:0000314"/>
    <property type="project" value="SGD"/>
</dbReference>
<dbReference type="GO" id="GO:0097373">
    <property type="term" value="C:MCM core complex"/>
    <property type="evidence" value="ECO:0000314"/>
    <property type="project" value="SGD"/>
</dbReference>
<dbReference type="GO" id="GO:0005656">
    <property type="term" value="C:nuclear pre-replicative complex"/>
    <property type="evidence" value="ECO:0000314"/>
    <property type="project" value="SGD"/>
</dbReference>
<dbReference type="GO" id="GO:0043596">
    <property type="term" value="C:nuclear replication fork"/>
    <property type="evidence" value="ECO:0000314"/>
    <property type="project" value="ComplexPortal"/>
</dbReference>
<dbReference type="GO" id="GO:0005654">
    <property type="term" value="C:nucleoplasm"/>
    <property type="evidence" value="ECO:0000304"/>
    <property type="project" value="Reactome"/>
</dbReference>
<dbReference type="GO" id="GO:0005634">
    <property type="term" value="C:nucleus"/>
    <property type="evidence" value="ECO:0000314"/>
    <property type="project" value="SGD"/>
</dbReference>
<dbReference type="GO" id="GO:0031298">
    <property type="term" value="C:replication fork protection complex"/>
    <property type="evidence" value="ECO:0007669"/>
    <property type="project" value="UniProtKB-ARBA"/>
</dbReference>
<dbReference type="GO" id="GO:0005524">
    <property type="term" value="F:ATP binding"/>
    <property type="evidence" value="ECO:0007669"/>
    <property type="project" value="UniProtKB-KW"/>
</dbReference>
<dbReference type="GO" id="GO:0016887">
    <property type="term" value="F:ATP hydrolysis activity"/>
    <property type="evidence" value="ECO:0007669"/>
    <property type="project" value="RHEA"/>
</dbReference>
<dbReference type="GO" id="GO:0003688">
    <property type="term" value="F:DNA replication origin binding"/>
    <property type="evidence" value="ECO:0000314"/>
    <property type="project" value="SGD"/>
</dbReference>
<dbReference type="GO" id="GO:0003697">
    <property type="term" value="F:single-stranded DNA binding"/>
    <property type="evidence" value="ECO:0000318"/>
    <property type="project" value="GO_Central"/>
</dbReference>
<dbReference type="GO" id="GO:0017116">
    <property type="term" value="F:single-stranded DNA helicase activity"/>
    <property type="evidence" value="ECO:0000314"/>
    <property type="project" value="SGD"/>
</dbReference>
<dbReference type="GO" id="GO:0006260">
    <property type="term" value="P:DNA replication"/>
    <property type="evidence" value="ECO:0000314"/>
    <property type="project" value="SGD"/>
</dbReference>
<dbReference type="GO" id="GO:0006270">
    <property type="term" value="P:DNA replication initiation"/>
    <property type="evidence" value="ECO:0007669"/>
    <property type="project" value="InterPro"/>
</dbReference>
<dbReference type="GO" id="GO:0006271">
    <property type="term" value="P:DNA strand elongation involved in DNA replication"/>
    <property type="evidence" value="ECO:0000315"/>
    <property type="project" value="SGD"/>
</dbReference>
<dbReference type="GO" id="GO:0000727">
    <property type="term" value="P:double-strand break repair via break-induced replication"/>
    <property type="evidence" value="ECO:0000315"/>
    <property type="project" value="SGD"/>
</dbReference>
<dbReference type="GO" id="GO:1902969">
    <property type="term" value="P:mitotic DNA replication"/>
    <property type="evidence" value="ECO:0000318"/>
    <property type="project" value="GO_Central"/>
</dbReference>
<dbReference type="GO" id="GO:0006267">
    <property type="term" value="P:pre-replicative complex assembly involved in nuclear cell cycle DNA replication"/>
    <property type="evidence" value="ECO:0000314"/>
    <property type="project" value="SGD"/>
</dbReference>
<dbReference type="GO" id="GO:0006279">
    <property type="term" value="P:premeiotic DNA replication"/>
    <property type="evidence" value="ECO:0000314"/>
    <property type="project" value="ComplexPortal"/>
</dbReference>
<dbReference type="CDD" id="cd17757">
    <property type="entry name" value="MCM6"/>
    <property type="match status" value="1"/>
</dbReference>
<dbReference type="FunFam" id="1.20.58.870:FF:000002">
    <property type="entry name" value="DNA helicase"/>
    <property type="match status" value="1"/>
</dbReference>
<dbReference type="FunFam" id="2.20.28.10:FF:000003">
    <property type="entry name" value="DNA helicase"/>
    <property type="match status" value="1"/>
</dbReference>
<dbReference type="FunFam" id="3.30.1640.10:FF:000009">
    <property type="entry name" value="DNA helicase"/>
    <property type="match status" value="1"/>
</dbReference>
<dbReference type="FunFam" id="3.40.50.300:FF:000115">
    <property type="entry name" value="DNA helicase"/>
    <property type="match status" value="1"/>
</dbReference>
<dbReference type="Gene3D" id="1.20.58.870">
    <property type="match status" value="1"/>
</dbReference>
<dbReference type="Gene3D" id="2.20.28.10">
    <property type="match status" value="1"/>
</dbReference>
<dbReference type="Gene3D" id="3.30.1640.10">
    <property type="entry name" value="mini-chromosome maintenance (MCM) complex, chain A, domain 1"/>
    <property type="match status" value="1"/>
</dbReference>
<dbReference type="Gene3D" id="2.40.50.140">
    <property type="entry name" value="Nucleic acid-binding proteins"/>
    <property type="match status" value="1"/>
</dbReference>
<dbReference type="Gene3D" id="3.40.50.300">
    <property type="entry name" value="P-loop containing nucleotide triphosphate hydrolases"/>
    <property type="match status" value="1"/>
</dbReference>
<dbReference type="InterPro" id="IPR031327">
    <property type="entry name" value="MCM"/>
</dbReference>
<dbReference type="InterPro" id="IPR008049">
    <property type="entry name" value="MCM6"/>
</dbReference>
<dbReference type="InterPro" id="IPR041024">
    <property type="entry name" value="Mcm6_C"/>
</dbReference>
<dbReference type="InterPro" id="IPR018525">
    <property type="entry name" value="MCM_CS"/>
</dbReference>
<dbReference type="InterPro" id="IPR001208">
    <property type="entry name" value="MCM_dom"/>
</dbReference>
<dbReference type="InterPro" id="IPR041562">
    <property type="entry name" value="MCM_lid"/>
</dbReference>
<dbReference type="InterPro" id="IPR027925">
    <property type="entry name" value="MCM_N"/>
</dbReference>
<dbReference type="InterPro" id="IPR033762">
    <property type="entry name" value="MCM_OB"/>
</dbReference>
<dbReference type="InterPro" id="IPR012340">
    <property type="entry name" value="NA-bd_OB-fold"/>
</dbReference>
<dbReference type="InterPro" id="IPR027417">
    <property type="entry name" value="P-loop_NTPase"/>
</dbReference>
<dbReference type="PANTHER" id="PTHR11630">
    <property type="entry name" value="DNA REPLICATION LICENSING FACTOR MCM FAMILY MEMBER"/>
    <property type="match status" value="1"/>
</dbReference>
<dbReference type="PANTHER" id="PTHR11630:SF43">
    <property type="entry name" value="DNA REPLICATION LICENSING FACTOR MCM6"/>
    <property type="match status" value="1"/>
</dbReference>
<dbReference type="Pfam" id="PF00493">
    <property type="entry name" value="MCM"/>
    <property type="match status" value="1"/>
</dbReference>
<dbReference type="Pfam" id="PF18263">
    <property type="entry name" value="MCM6_C"/>
    <property type="match status" value="1"/>
</dbReference>
<dbReference type="Pfam" id="PF17855">
    <property type="entry name" value="MCM_lid"/>
    <property type="match status" value="1"/>
</dbReference>
<dbReference type="Pfam" id="PF14551">
    <property type="entry name" value="MCM_N"/>
    <property type="match status" value="1"/>
</dbReference>
<dbReference type="Pfam" id="PF17207">
    <property type="entry name" value="MCM_OB"/>
    <property type="match status" value="1"/>
</dbReference>
<dbReference type="PRINTS" id="PR01657">
    <property type="entry name" value="MCMFAMILY"/>
</dbReference>
<dbReference type="PRINTS" id="PR01662">
    <property type="entry name" value="MCMPROTEIN6"/>
</dbReference>
<dbReference type="SMART" id="SM00350">
    <property type="entry name" value="MCM"/>
    <property type="match status" value="1"/>
</dbReference>
<dbReference type="SUPFAM" id="SSF50249">
    <property type="entry name" value="Nucleic acid-binding proteins"/>
    <property type="match status" value="1"/>
</dbReference>
<dbReference type="SUPFAM" id="SSF52540">
    <property type="entry name" value="P-loop containing nucleoside triphosphate hydrolases"/>
    <property type="match status" value="1"/>
</dbReference>
<dbReference type="PROSITE" id="PS00847">
    <property type="entry name" value="MCM_1"/>
    <property type="match status" value="1"/>
</dbReference>
<dbReference type="PROSITE" id="PS50051">
    <property type="entry name" value="MCM_2"/>
    <property type="match status" value="1"/>
</dbReference>
<sequence>MSSPFPADTPSSNRPSNSSPPPSSIGAGFGSSSGLDSQIGSRLHFPSSSQPHVSNSQTGPFVNDSTQFSSQRLQTDGSATNDMEGNEPARSFKSRALNHVKKVDDVTGEKVREAFEQFLEDFSVQSTDTGEVEKVYRAQIEFMKIYDLNTIYIDYQHLSMRENGALAMAISEQYYRFLPFLQKGLRRVVRKYAPELLNTSDSLKRSEGDEGQADEDEQQDDDMNGSSLPRDSGSSAAPGNGTSAMATRSITTSTSPEQTERVFQISFFNLPTVHRIRDIRSEKIGSLLSISGTVTRTSEVRPELYKASFTCDMCRAIVDNVEQSFKYTEPTFCPNPSCENRAFWTLNVTRSRFLDWQKVRIQENANEIPTGSMPRTLDVILRGDSVERAKPGDRCKFTGVEIVVPDVTQLGLPGVKPSSTLDTRGISKTTEGLNSGVTGLRSLGVRDLTYKISFLACHVISIGSNIGASSPDANSNNRETELQMAANLQANNVYQDNERDQEVFLNSLSSDEINELKEMVKDEHIYDKLVRSIAPAVFGHEAVKKGILLQMLGGVHKSTVEGIKLRGDINICVVGDPSTSKSQFLKYVVGFAPRSVYTSGKASSAAGLTAAVVRDEEGGDYTIEAGALMLADNGICCIDEFDKMDISDQVAIHEAMEQQTISIAKAGIHATLNARTSILAAANPVGGRYNRKLSLRGNLNMTAPIMSRFDLFFVILDDCNEKIDTELASHIVDLHMKRDEAIEPPFSAEQLRRYIKYARTFKPILTKEARSYLVEKYKELRKDDAQGFSRSSYRITVRQLESMIRLSEAIARANCVDEITPSFIAEAYDLLRQSIIRVDVDDVEMDEEFDNIESQSHAASGNNDDNDDGTGSGVITSEPPADIEEGQSEATARPGTSEKKKTTVTYDKYVSMMNMIVRKIAEVDREGAEELTAVDIVDWYLLQKENDLGSLAEYWEERRLAFKVIKRLVKDRILMEIHGTRHNLRDLENEENENNKTVYVIHPNCEVLDQLEPQDSS</sequence>